<name>DPOL_HBVCJ</name>
<evidence type="ECO:0000255" key="1">
    <source>
        <dbReference type="HAMAP-Rule" id="MF_04073"/>
    </source>
</evidence>
<evidence type="ECO:0000256" key="2">
    <source>
        <dbReference type="SAM" id="MobiDB-lite"/>
    </source>
</evidence>
<accession>Q69028</accession>
<accession>Q69026</accession>
<organismHost>
    <name type="scientific">Homo sapiens</name>
    <name type="common">Human</name>
    <dbReference type="NCBI Taxonomy" id="9606"/>
</organismHost>
<organismHost>
    <name type="scientific">Pan troglodytes</name>
    <name type="common">Chimpanzee</name>
    <dbReference type="NCBI Taxonomy" id="9598"/>
</organismHost>
<feature type="chain" id="PRO_0000390310" description="Protein P">
    <location>
        <begin position="1"/>
        <end position="843"/>
    </location>
</feature>
<feature type="domain" description="Reverse transcriptase" evidence="1">
    <location>
        <begin position="357"/>
        <end position="600"/>
    </location>
</feature>
<feature type="region of interest" description="Terminal protein domain (TP)" evidence="1">
    <location>
        <begin position="1"/>
        <end position="177"/>
    </location>
</feature>
<feature type="region of interest" description="Spacer" evidence="1">
    <location>
        <begin position="178"/>
        <end position="346"/>
    </location>
</feature>
<feature type="region of interest" description="Disordered" evidence="2">
    <location>
        <begin position="224"/>
        <end position="273"/>
    </location>
</feature>
<feature type="region of interest" description="Disordered" evidence="2">
    <location>
        <begin position="288"/>
        <end position="316"/>
    </location>
</feature>
<feature type="region of interest" description="Polymerase/reverse transcriptase domain (RT)" evidence="1">
    <location>
        <begin position="347"/>
        <end position="690"/>
    </location>
</feature>
<feature type="compositionally biased region" description="Polar residues" evidence="2">
    <location>
        <begin position="288"/>
        <end position="299"/>
    </location>
</feature>
<feature type="binding site" evidence="1">
    <location>
        <position position="429"/>
    </location>
    <ligand>
        <name>Mg(2+)</name>
        <dbReference type="ChEBI" id="CHEBI:18420"/>
        <note>catalytic</note>
    </ligand>
</feature>
<feature type="binding site" evidence="1">
    <location>
        <position position="551"/>
    </location>
    <ligand>
        <name>Mg(2+)</name>
        <dbReference type="ChEBI" id="CHEBI:18420"/>
        <note>catalytic</note>
    </ligand>
</feature>
<feature type="binding site" evidence="1">
    <location>
        <position position="552"/>
    </location>
    <ligand>
        <name>Mg(2+)</name>
        <dbReference type="ChEBI" id="CHEBI:18420"/>
        <note>catalytic</note>
    </ligand>
</feature>
<feature type="site" description="Priming of reverse-transcription by covalently linking the first nucleotide of the (-)DNA" evidence="1">
    <location>
        <position position="63"/>
    </location>
</feature>
<organism>
    <name type="scientific">Hepatitis B virus genotype C subtype ayr (isolate Human/Japan/Okamoto/-)</name>
    <name type="common">HBV-C</name>
    <dbReference type="NCBI Taxonomy" id="928302"/>
    <lineage>
        <taxon>Viruses</taxon>
        <taxon>Riboviria</taxon>
        <taxon>Pararnavirae</taxon>
        <taxon>Artverviricota</taxon>
        <taxon>Revtraviricetes</taxon>
        <taxon>Blubervirales</taxon>
        <taxon>Hepadnaviridae</taxon>
        <taxon>Orthohepadnavirus</taxon>
        <taxon>Hepatitis B virus</taxon>
        <taxon>hepatitis B virus genotype C</taxon>
    </lineage>
</organism>
<gene>
    <name evidence="1" type="primary">P</name>
</gene>
<keyword id="KW-0235">DNA replication</keyword>
<keyword id="KW-0238">DNA-binding</keyword>
<keyword id="KW-0239">DNA-directed DNA polymerase</keyword>
<keyword id="KW-0255">Endonuclease</keyword>
<keyword id="KW-0945">Host-virus interaction</keyword>
<keyword id="KW-0378">Hydrolase</keyword>
<keyword id="KW-1090">Inhibition of host innate immune response by virus</keyword>
<keyword id="KW-1113">Inhibition of host RLR pathway by virus</keyword>
<keyword id="KW-0460">Magnesium</keyword>
<keyword id="KW-0479">Metal-binding</keyword>
<keyword id="KW-0511">Multifunctional enzyme</keyword>
<keyword id="KW-0540">Nuclease</keyword>
<keyword id="KW-0548">Nucleotidyltransferase</keyword>
<keyword id="KW-1185">Reference proteome</keyword>
<keyword id="KW-0695">RNA-directed DNA polymerase</keyword>
<keyword id="KW-0808">Transferase</keyword>
<keyword id="KW-0899">Viral immunoevasion</keyword>
<proteinExistence type="inferred from homology"/>
<reference key="1">
    <citation type="journal article" date="1986" name="J. Gen. Virol.">
        <title>Nucleotide sequence of a cloned hepatitis B virus genome, subtype ayr: comparison with genomes of the other three subtypes.</title>
        <authorList>
            <person name="Okamoto H."/>
            <person name="Imai M."/>
            <person name="Shimozaki M."/>
            <person name="Hoshi Y."/>
            <person name="Iizuka H."/>
            <person name="Gotanda T."/>
            <person name="Tsuda F."/>
            <person name="Miyakawa Y."/>
            <person name="Mayumi M."/>
        </authorList>
    </citation>
    <scope>NUCLEOTIDE SEQUENCE [GENOMIC DNA]</scope>
</reference>
<sequence length="843" mass="94594">MPLSYQHFRKLLLLDDEAGPLEEELPRLADEGLNRRVAEDLNLGNLNVSIPWTHKVGNFTGLYSSTVPVFNPDWKTPSFPHIHLQEDIINRCQQYVGPLTVNEKRRLKLIMPARFYPNLTKYLPLDKGIKPYYPEYAVNHYFKTRHYLHTLWKAGILYKRETTRSASFCGSPYSWEQELQHGRLVFQTSTRHGDESFCSQSSGILSRSPVGPCVRSQLKQSRLGLQPQQGSLARGKSGRSGSIWSRVHPTTRRPFGVEPSGSGHIDNTASSTSSCLHQSAVRKTAYSHLSTSKRQSSSGHAVELHNIPPSSARSQSEGPIFSCWWLQFRNSKPCSDYCLTHIVNLLEDWGPCTEHGEHNIRIPRTPARVTGGVFLVDKNPHNTTESRLVVDFSQFSRGSTHVSWPKFAVPNLQSLTNLLSSNLSWLSLDVSAAFYHIPLHPAAMPHLLVGSSGLPRYVARLSSTSRNINYQHGTMQNLHDSCSRNLYVSLLLLYKTFGRKLHLYSHPIILGFRKIPMGVGLSPFLLAQFTSAICSVVRRAFPHCLAFSYMDDVVLGAKSVQHLESLFTSITNFLLSLGIHLNPNKTKRWGYSLNFMGYVIGSWGTLPQEHIVQKLKQCFRKLPVNRPIDWKVCQRIVGLLGFAAPFTQCGYPALMPLYACIQSKQAFTFSPTYKAFLCKQYLNLYPVARQRSGLCQVFADATPTGWGLAIGHRRMRGTFVAPLPIHTAELLAACFARSRSGAKLIGTDNSVVLSRKYTSFPWLLGCAANWILRGTSFVYVPSALNPADDPSRGRLGLYRPLLHLPFRPTTGRTSLYAVSPSVPSHLPDRVHFASPLHVAWRPP</sequence>
<comment type="function">
    <text evidence="1">Multifunctional enzyme that converts the viral RNA genome into dsDNA in viral cytoplasmic capsids. This enzyme displays a DNA polymerase activity that can copy either DNA or RNA templates, and a ribonuclease H (RNase H) activity that cleaves the RNA strand of RNA-DNA heteroduplexes in a partially processive 3'- to 5'-endonucleasic mode. Neo-synthesized pregenomic RNA (pgRNA) are encapsidated together with the P protein, and reverse-transcribed inside the nucleocapsid. Initiation of reverse-transcription occurs first by binding the epsilon loop on the pgRNA genome, and is initiated by protein priming, thereby the 5'-end of (-)DNA is covalently linked to P protein. Partial (+)DNA is synthesized from the (-)DNA template and generates the relaxed circular DNA (RC-DNA) genome. After budding and infection, the RC-DNA migrates in the nucleus, and is converted into a plasmid-like covalently closed circular DNA (cccDNA). The activity of P protein does not seem to be necessary for cccDNA generation, and is presumably released from (+)DNA by host nuclear DNA repair machinery.</text>
</comment>
<comment type="catalytic activity">
    <reaction evidence="1">
        <text>DNA(n) + a 2'-deoxyribonucleoside 5'-triphosphate = DNA(n+1) + diphosphate</text>
        <dbReference type="Rhea" id="RHEA:22508"/>
        <dbReference type="Rhea" id="RHEA-COMP:17339"/>
        <dbReference type="Rhea" id="RHEA-COMP:17340"/>
        <dbReference type="ChEBI" id="CHEBI:33019"/>
        <dbReference type="ChEBI" id="CHEBI:61560"/>
        <dbReference type="ChEBI" id="CHEBI:173112"/>
        <dbReference type="EC" id="2.7.7.7"/>
    </reaction>
</comment>
<comment type="catalytic activity">
    <reaction evidence="1">
        <text>DNA(n) + a 2'-deoxyribonucleoside 5'-triphosphate = DNA(n+1) + diphosphate</text>
        <dbReference type="Rhea" id="RHEA:22508"/>
        <dbReference type="Rhea" id="RHEA-COMP:17339"/>
        <dbReference type="Rhea" id="RHEA-COMP:17340"/>
        <dbReference type="ChEBI" id="CHEBI:33019"/>
        <dbReference type="ChEBI" id="CHEBI:61560"/>
        <dbReference type="ChEBI" id="CHEBI:173112"/>
        <dbReference type="EC" id="2.7.7.49"/>
    </reaction>
</comment>
<comment type="catalytic activity">
    <reaction evidence="1">
        <text>Endonucleolytic cleavage to 5'-phosphomonoester.</text>
        <dbReference type="EC" id="3.1.26.4"/>
    </reaction>
</comment>
<comment type="activity regulation">
    <text evidence="1">Activated by host HSP70 and HSP40 in vitro to be able to bind the epsilon loop of the pgRNA. Because deletion of the RNase H region renders the protein partly chaperone-independent, the chaperones may be needed indirectly to relieve occlusion of the RNA-binding site by this domain. Inhibited by several reverse-transcriptase inhibitors: Lamivudine, Adefovir and Entecavir.</text>
</comment>
<comment type="domain">
    <text evidence="1">Terminal protein domain (TP) is hepadnavirus-specific. Spacer domain is highly variable and separates the TP and RT domains. Polymerase/reverse-transcriptase domain (RT) and ribonuclease H domain (RH) are similar to retrovirus reverse transcriptase/RNase H.</text>
</comment>
<comment type="domain">
    <text evidence="1">The polymerase/reverse transcriptase (RT) and ribonuclease H (RH) domains are structured in five subdomains: finger, palm, thumb, connection and RNase H. Within the palm subdomain, the 'primer grip' region is thought to be involved in the positioning of the primer terminus for accommodating the incoming nucleotide. The RH domain stabilizes the association of RT with primer-template.</text>
</comment>
<comment type="miscellaneous">
    <text evidence="1">Hepadnaviral virions contain probably just one P protein molecule per particle.</text>
</comment>
<comment type="similarity">
    <text evidence="1">Belongs to the hepadnaviridae P protein family.</text>
</comment>
<dbReference type="EC" id="2.7.7.7" evidence="1"/>
<dbReference type="EC" id="2.7.7.49" evidence="1"/>
<dbReference type="EC" id="3.1.26.4" evidence="1"/>
<dbReference type="EMBL" id="X04615">
    <property type="protein sequence ID" value="CAA28290.1"/>
    <property type="status" value="ALT_SEQ"/>
    <property type="molecule type" value="Genomic_DNA"/>
</dbReference>
<dbReference type="EMBL" id="X04615">
    <property type="protein sequence ID" value="CAA28286.1"/>
    <property type="status" value="ALT_SEQ"/>
    <property type="molecule type" value="Genomic_DNA"/>
</dbReference>
<dbReference type="IntAct" id="Q69028">
    <property type="interactions" value="1"/>
</dbReference>
<dbReference type="Proteomes" id="UP000008591">
    <property type="component" value="Segment"/>
</dbReference>
<dbReference type="GO" id="GO:0003677">
    <property type="term" value="F:DNA binding"/>
    <property type="evidence" value="ECO:0007669"/>
    <property type="project" value="UniProtKB-UniRule"/>
</dbReference>
<dbReference type="GO" id="GO:0003887">
    <property type="term" value="F:DNA-directed DNA polymerase activity"/>
    <property type="evidence" value="ECO:0000314"/>
    <property type="project" value="UniProtKB"/>
</dbReference>
<dbReference type="GO" id="GO:0046872">
    <property type="term" value="F:metal ion binding"/>
    <property type="evidence" value="ECO:0007669"/>
    <property type="project" value="UniProtKB-UniRule"/>
</dbReference>
<dbReference type="GO" id="GO:0003964">
    <property type="term" value="F:RNA-directed DNA polymerase activity"/>
    <property type="evidence" value="ECO:0000314"/>
    <property type="project" value="UniProtKB"/>
</dbReference>
<dbReference type="GO" id="GO:0004523">
    <property type="term" value="F:RNA-DNA hybrid ribonuclease activity"/>
    <property type="evidence" value="ECO:0000314"/>
    <property type="project" value="UniProtKB"/>
</dbReference>
<dbReference type="GO" id="GO:0006260">
    <property type="term" value="P:DNA replication"/>
    <property type="evidence" value="ECO:0007669"/>
    <property type="project" value="UniProtKB-UniRule"/>
</dbReference>
<dbReference type="GO" id="GO:0052170">
    <property type="term" value="P:symbiont-mediated suppression of host innate immune response"/>
    <property type="evidence" value="ECO:0007669"/>
    <property type="project" value="UniProtKB-UniRule"/>
</dbReference>
<dbReference type="FunFam" id="3.30.70.270:FF:000009">
    <property type="entry name" value="Protein P"/>
    <property type="match status" value="1"/>
</dbReference>
<dbReference type="Gene3D" id="3.30.70.270">
    <property type="match status" value="1"/>
</dbReference>
<dbReference type="HAMAP" id="MF_04073">
    <property type="entry name" value="HBV_DPOL"/>
    <property type="match status" value="1"/>
</dbReference>
<dbReference type="InterPro" id="IPR043502">
    <property type="entry name" value="DNA/RNA_pol_sf"/>
</dbReference>
<dbReference type="InterPro" id="IPR001462">
    <property type="entry name" value="DNApol_viral_C"/>
</dbReference>
<dbReference type="InterPro" id="IPR000201">
    <property type="entry name" value="DNApol_viral_N"/>
</dbReference>
<dbReference type="InterPro" id="IPR037531">
    <property type="entry name" value="HBV_DPOL"/>
</dbReference>
<dbReference type="InterPro" id="IPR043128">
    <property type="entry name" value="Rev_trsase/Diguanyl_cyclase"/>
</dbReference>
<dbReference type="InterPro" id="IPR000477">
    <property type="entry name" value="RT_dom"/>
</dbReference>
<dbReference type="InterPro" id="IPR051320">
    <property type="entry name" value="Viral_Replic_Matur_Polypro"/>
</dbReference>
<dbReference type="PANTHER" id="PTHR33064:SF29">
    <property type="entry name" value="PEPTIDASE A2 DOMAIN-CONTAINING PROTEIN-RELATED"/>
    <property type="match status" value="1"/>
</dbReference>
<dbReference type="PANTHER" id="PTHR33064">
    <property type="entry name" value="POL PROTEIN"/>
    <property type="match status" value="1"/>
</dbReference>
<dbReference type="Pfam" id="PF00336">
    <property type="entry name" value="DNA_pol_viral_C"/>
    <property type="match status" value="1"/>
</dbReference>
<dbReference type="Pfam" id="PF00242">
    <property type="entry name" value="DNA_pol_viral_N"/>
    <property type="match status" value="1"/>
</dbReference>
<dbReference type="Pfam" id="PF00078">
    <property type="entry name" value="RVT_1"/>
    <property type="match status" value="1"/>
</dbReference>
<dbReference type="SUPFAM" id="SSF56672">
    <property type="entry name" value="DNA/RNA polymerases"/>
    <property type="match status" value="1"/>
</dbReference>
<dbReference type="PROSITE" id="PS50878">
    <property type="entry name" value="RT_POL"/>
    <property type="match status" value="1"/>
</dbReference>
<protein>
    <recommendedName>
        <fullName evidence="1">Protein P</fullName>
    </recommendedName>
    <domain>
        <recommendedName>
            <fullName evidence="1">DNA-directed DNA polymerase</fullName>
            <ecNumber evidence="1">2.7.7.7</ecNumber>
        </recommendedName>
    </domain>
    <domain>
        <recommendedName>
            <fullName evidence="1">RNA-directed DNA polymerase</fullName>
            <ecNumber evidence="1">2.7.7.49</ecNumber>
        </recommendedName>
    </domain>
    <domain>
        <recommendedName>
            <fullName evidence="1">Ribonuclease H</fullName>
            <ecNumber evidence="1">3.1.26.4</ecNumber>
        </recommendedName>
    </domain>
</protein>